<reference key="1">
    <citation type="journal article" date="1997" name="Mol. Biochem. Parasitol.">
        <title>Molecular characterization and expression of two putative protective excretory secretory proteins of Haemonchus contortus.</title>
        <authorList>
            <person name="Schallig H.D.F.H."/>
            <person name="van Leeuwen M.A.W."/>
            <person name="Verstrepen B.E."/>
            <person name="Cornelissen A.W.C.A."/>
        </authorList>
    </citation>
    <scope>NUCLEOTIDE SEQUENCE [MRNA]</scope>
</reference>
<accession>O18518</accession>
<keyword id="KW-0964">Secreted</keyword>
<keyword id="KW-0732">Signal</keyword>
<evidence type="ECO:0000255" key="1"/>
<evidence type="ECO:0000305" key="2"/>
<proteinExistence type="evidence at transcript level"/>
<name>ES15_HAECO</name>
<protein>
    <recommendedName>
        <fullName>15 kDa excretory/secretory protein</fullName>
        <shortName>15 kDa ES</shortName>
    </recommendedName>
</protein>
<feature type="signal peptide" evidence="1">
    <location>
        <begin position="1"/>
        <end position="19"/>
    </location>
</feature>
<feature type="chain" id="PRO_0000021202" description="15 kDa excretory/secretory protein">
    <location>
        <begin position="20"/>
        <end position="148"/>
    </location>
</feature>
<dbReference type="EMBL" id="U64792">
    <property type="protein sequence ID" value="AAC47713.1"/>
    <property type="molecule type" value="mRNA"/>
</dbReference>
<dbReference type="Proteomes" id="UP000025227">
    <property type="component" value="Unplaced"/>
</dbReference>
<dbReference type="GO" id="GO:0005576">
    <property type="term" value="C:extracellular region"/>
    <property type="evidence" value="ECO:0007669"/>
    <property type="project" value="UniProtKB-SubCell"/>
</dbReference>
<organism>
    <name type="scientific">Haemonchus contortus</name>
    <name type="common">Barber pole worm</name>
    <dbReference type="NCBI Taxonomy" id="6289"/>
    <lineage>
        <taxon>Eukaryota</taxon>
        <taxon>Metazoa</taxon>
        <taxon>Ecdysozoa</taxon>
        <taxon>Nematoda</taxon>
        <taxon>Chromadorea</taxon>
        <taxon>Rhabditida</taxon>
        <taxon>Rhabditina</taxon>
        <taxon>Rhabditomorpha</taxon>
        <taxon>Strongyloidea</taxon>
        <taxon>Trichostrongylidae</taxon>
        <taxon>Haemonchus</taxon>
    </lineage>
</organism>
<sequence length="148" mass="17199">MFFAFAVLLIALATREAYGESQLNTKFILGSGNQVMFENINKEYNTHLKWDDDLAAKAMVEAVRPHYRLLWNTGDYFTIRNDKLFTKRYVGPLEEKVRLVLLNPFKKYADKLRQLPEGTTYGCNGFFDTDTMPNDNYLYVACVYNIPN</sequence>
<comment type="subcellular location">
    <subcellularLocation>
        <location>Secreted</location>
    </subcellularLocation>
</comment>
<comment type="similarity">
    <text evidence="2">To T.colubriformis 30 kDa antigenic glycoprotein.</text>
</comment>